<sequence>MTIGRMENVEVFTAEGKGRGLKATKEFWAADIIFAERAYSAVVFDSLVNFVCHTCFKRQEKLHRCGQCKFAHYCDRTCQKDAWLNHKNECSAIKRYGKVPNENIRLAARIMWRVEREGTGLTEGCLVSVDDLQNHVEHFGEEEQKDLRVDVDTFLQYWPPQSQQFSMQYISHIFGVINCNGFTLSDQRGLQAVGVGIFPNLGLVNHDCWPNCTVIFNNGNHEAVKSMFHTQMRIELRALGKISEGEELTVSYIDFLNVSEERKRQLKKQYYFDCTCEHCQKKLKDDLFLGVKDNPKPSQEVVKEMIQFSKDTLEKIDKARSEGLYHEVVKLCRECLEKQEPVFADTNIYMLRMLSIVSEVLSYLQAFEEASFYARRMVDGYMKLYHPNNAQLGMAVMRAGLTNWHAGNIEVGHGMICKAYAILLVTHGPSHPITKDLEAMRVQTEMELRMFRQNEFMYYKMREAALNNQPMQVMAEPSNEPSPALFHKKQ</sequence>
<accession>Q8NB12</accession>
<accession>A0AV30</accession>
<accession>A6NE13</accession>
<reference key="1">
    <citation type="journal article" date="2004" name="Nat. Genet.">
        <title>Complete sequencing and characterization of 21,243 full-length human cDNAs.</title>
        <authorList>
            <person name="Ota T."/>
            <person name="Suzuki Y."/>
            <person name="Nishikawa T."/>
            <person name="Otsuki T."/>
            <person name="Sugiyama T."/>
            <person name="Irie R."/>
            <person name="Wakamatsu A."/>
            <person name="Hayashi K."/>
            <person name="Sato H."/>
            <person name="Nagai K."/>
            <person name="Kimura K."/>
            <person name="Makita H."/>
            <person name="Sekine M."/>
            <person name="Obayashi M."/>
            <person name="Nishi T."/>
            <person name="Shibahara T."/>
            <person name="Tanaka T."/>
            <person name="Ishii S."/>
            <person name="Yamamoto J."/>
            <person name="Saito K."/>
            <person name="Kawai Y."/>
            <person name="Isono Y."/>
            <person name="Nakamura Y."/>
            <person name="Nagahari K."/>
            <person name="Murakami K."/>
            <person name="Yasuda T."/>
            <person name="Iwayanagi T."/>
            <person name="Wagatsuma M."/>
            <person name="Shiratori A."/>
            <person name="Sudo H."/>
            <person name="Hosoiri T."/>
            <person name="Kaku Y."/>
            <person name="Kodaira H."/>
            <person name="Kondo H."/>
            <person name="Sugawara M."/>
            <person name="Takahashi M."/>
            <person name="Kanda K."/>
            <person name="Yokoi T."/>
            <person name="Furuya T."/>
            <person name="Kikkawa E."/>
            <person name="Omura Y."/>
            <person name="Abe K."/>
            <person name="Kamihara K."/>
            <person name="Katsuta N."/>
            <person name="Sato K."/>
            <person name="Tanikawa M."/>
            <person name="Yamazaki M."/>
            <person name="Ninomiya K."/>
            <person name="Ishibashi T."/>
            <person name="Yamashita H."/>
            <person name="Murakawa K."/>
            <person name="Fujimori K."/>
            <person name="Tanai H."/>
            <person name="Kimata M."/>
            <person name="Watanabe M."/>
            <person name="Hiraoka S."/>
            <person name="Chiba Y."/>
            <person name="Ishida S."/>
            <person name="Ono Y."/>
            <person name="Takiguchi S."/>
            <person name="Watanabe S."/>
            <person name="Yosida M."/>
            <person name="Hotuta T."/>
            <person name="Kusano J."/>
            <person name="Kanehori K."/>
            <person name="Takahashi-Fujii A."/>
            <person name="Hara H."/>
            <person name="Tanase T.-O."/>
            <person name="Nomura Y."/>
            <person name="Togiya S."/>
            <person name="Komai F."/>
            <person name="Hara R."/>
            <person name="Takeuchi K."/>
            <person name="Arita M."/>
            <person name="Imose N."/>
            <person name="Musashino K."/>
            <person name="Yuuki H."/>
            <person name="Oshima A."/>
            <person name="Sasaki N."/>
            <person name="Aotsuka S."/>
            <person name="Yoshikawa Y."/>
            <person name="Matsunawa H."/>
            <person name="Ichihara T."/>
            <person name="Shiohata N."/>
            <person name="Sano S."/>
            <person name="Moriya S."/>
            <person name="Momiyama H."/>
            <person name="Satoh N."/>
            <person name="Takami S."/>
            <person name="Terashima Y."/>
            <person name="Suzuki O."/>
            <person name="Nakagawa S."/>
            <person name="Senoh A."/>
            <person name="Mizoguchi H."/>
            <person name="Goto Y."/>
            <person name="Shimizu F."/>
            <person name="Wakebe H."/>
            <person name="Hishigaki H."/>
            <person name="Watanabe T."/>
            <person name="Sugiyama A."/>
            <person name="Takemoto M."/>
            <person name="Kawakami B."/>
            <person name="Yamazaki M."/>
            <person name="Watanabe K."/>
            <person name="Kumagai A."/>
            <person name="Itakura S."/>
            <person name="Fukuzumi Y."/>
            <person name="Fujimori Y."/>
            <person name="Komiyama M."/>
            <person name="Tashiro H."/>
            <person name="Tanigami A."/>
            <person name="Fujiwara T."/>
            <person name="Ono T."/>
            <person name="Yamada K."/>
            <person name="Fujii Y."/>
            <person name="Ozaki K."/>
            <person name="Hirao M."/>
            <person name="Ohmori Y."/>
            <person name="Kawabata A."/>
            <person name="Hikiji T."/>
            <person name="Kobatake N."/>
            <person name="Inagaki H."/>
            <person name="Ikema Y."/>
            <person name="Okamoto S."/>
            <person name="Okitani R."/>
            <person name="Kawakami T."/>
            <person name="Noguchi S."/>
            <person name="Itoh T."/>
            <person name="Shigeta K."/>
            <person name="Senba T."/>
            <person name="Matsumura K."/>
            <person name="Nakajima Y."/>
            <person name="Mizuno T."/>
            <person name="Morinaga M."/>
            <person name="Sasaki M."/>
            <person name="Togashi T."/>
            <person name="Oyama M."/>
            <person name="Hata H."/>
            <person name="Watanabe M."/>
            <person name="Komatsu T."/>
            <person name="Mizushima-Sugano J."/>
            <person name="Satoh T."/>
            <person name="Shirai Y."/>
            <person name="Takahashi Y."/>
            <person name="Nakagawa K."/>
            <person name="Okumura K."/>
            <person name="Nagase T."/>
            <person name="Nomura N."/>
            <person name="Kikuchi H."/>
            <person name="Masuho Y."/>
            <person name="Yamashita R."/>
            <person name="Nakai K."/>
            <person name="Yada T."/>
            <person name="Nakamura Y."/>
            <person name="Ohara O."/>
            <person name="Isogai T."/>
            <person name="Sugano S."/>
        </authorList>
    </citation>
    <scope>NUCLEOTIDE SEQUENCE [LARGE SCALE MRNA]</scope>
    <source>
        <tissue>Heart</tissue>
    </source>
</reference>
<reference key="2">
    <citation type="journal article" date="2007" name="BMC Genomics">
        <title>The full-ORF clone resource of the German cDNA consortium.</title>
        <authorList>
            <person name="Bechtel S."/>
            <person name="Rosenfelder H."/>
            <person name="Duda A."/>
            <person name="Schmidt C.P."/>
            <person name="Ernst U."/>
            <person name="Wellenreuther R."/>
            <person name="Mehrle A."/>
            <person name="Schuster C."/>
            <person name="Bahr A."/>
            <person name="Bloecker H."/>
            <person name="Heubner D."/>
            <person name="Hoerlein A."/>
            <person name="Michel G."/>
            <person name="Wedler H."/>
            <person name="Koehrer K."/>
            <person name="Ottenwaelder B."/>
            <person name="Poustka A."/>
            <person name="Wiemann S."/>
            <person name="Schupp I."/>
        </authorList>
    </citation>
    <scope>NUCLEOTIDE SEQUENCE [LARGE SCALE MRNA]</scope>
    <source>
        <tissue>Skeletal muscle</tissue>
    </source>
</reference>
<reference key="3">
    <citation type="journal article" date="2005" name="Nature">
        <title>Generation and annotation of the DNA sequences of human chromosomes 2 and 4.</title>
        <authorList>
            <person name="Hillier L.W."/>
            <person name="Graves T.A."/>
            <person name="Fulton R.S."/>
            <person name="Fulton L.A."/>
            <person name="Pepin K.H."/>
            <person name="Minx P."/>
            <person name="Wagner-McPherson C."/>
            <person name="Layman D."/>
            <person name="Wylie K."/>
            <person name="Sekhon M."/>
            <person name="Becker M.C."/>
            <person name="Fewell G.A."/>
            <person name="Delehaunty K.D."/>
            <person name="Miner T.L."/>
            <person name="Nash W.E."/>
            <person name="Kremitzki C."/>
            <person name="Oddy L."/>
            <person name="Du H."/>
            <person name="Sun H."/>
            <person name="Bradshaw-Cordum H."/>
            <person name="Ali J."/>
            <person name="Carter J."/>
            <person name="Cordes M."/>
            <person name="Harris A."/>
            <person name="Isak A."/>
            <person name="van Brunt A."/>
            <person name="Nguyen C."/>
            <person name="Du F."/>
            <person name="Courtney L."/>
            <person name="Kalicki J."/>
            <person name="Ozersky P."/>
            <person name="Abbott S."/>
            <person name="Armstrong J."/>
            <person name="Belter E.A."/>
            <person name="Caruso L."/>
            <person name="Cedroni M."/>
            <person name="Cotton M."/>
            <person name="Davidson T."/>
            <person name="Desai A."/>
            <person name="Elliott G."/>
            <person name="Erb T."/>
            <person name="Fronick C."/>
            <person name="Gaige T."/>
            <person name="Haakenson W."/>
            <person name="Haglund K."/>
            <person name="Holmes A."/>
            <person name="Harkins R."/>
            <person name="Kim K."/>
            <person name="Kruchowski S.S."/>
            <person name="Strong C.M."/>
            <person name="Grewal N."/>
            <person name="Goyea E."/>
            <person name="Hou S."/>
            <person name="Levy A."/>
            <person name="Martinka S."/>
            <person name="Mead K."/>
            <person name="McLellan M.D."/>
            <person name="Meyer R."/>
            <person name="Randall-Maher J."/>
            <person name="Tomlinson C."/>
            <person name="Dauphin-Kohlberg S."/>
            <person name="Kozlowicz-Reilly A."/>
            <person name="Shah N."/>
            <person name="Swearengen-Shahid S."/>
            <person name="Snider J."/>
            <person name="Strong J.T."/>
            <person name="Thompson J."/>
            <person name="Yoakum M."/>
            <person name="Leonard S."/>
            <person name="Pearman C."/>
            <person name="Trani L."/>
            <person name="Radionenko M."/>
            <person name="Waligorski J.E."/>
            <person name="Wang C."/>
            <person name="Rock S.M."/>
            <person name="Tin-Wollam A.-M."/>
            <person name="Maupin R."/>
            <person name="Latreille P."/>
            <person name="Wendl M.C."/>
            <person name="Yang S.-P."/>
            <person name="Pohl C."/>
            <person name="Wallis J.W."/>
            <person name="Spieth J."/>
            <person name="Bieri T.A."/>
            <person name="Berkowicz N."/>
            <person name="Nelson J.O."/>
            <person name="Osborne J."/>
            <person name="Ding L."/>
            <person name="Meyer R."/>
            <person name="Sabo A."/>
            <person name="Shotland Y."/>
            <person name="Sinha P."/>
            <person name="Wohldmann P.E."/>
            <person name="Cook L.L."/>
            <person name="Hickenbotham M.T."/>
            <person name="Eldred J."/>
            <person name="Williams D."/>
            <person name="Jones T.A."/>
            <person name="She X."/>
            <person name="Ciccarelli F.D."/>
            <person name="Izaurralde E."/>
            <person name="Taylor J."/>
            <person name="Schmutz J."/>
            <person name="Myers R.M."/>
            <person name="Cox D.R."/>
            <person name="Huang X."/>
            <person name="McPherson J.D."/>
            <person name="Mardis E.R."/>
            <person name="Clifton S.W."/>
            <person name="Warren W.C."/>
            <person name="Chinwalla A.T."/>
            <person name="Eddy S.R."/>
            <person name="Marra M.A."/>
            <person name="Ovcharenko I."/>
            <person name="Furey T.S."/>
            <person name="Miller W."/>
            <person name="Eichler E.E."/>
            <person name="Bork P."/>
            <person name="Suyama M."/>
            <person name="Torrents D."/>
            <person name="Waterston R.H."/>
            <person name="Wilson R.K."/>
        </authorList>
    </citation>
    <scope>NUCLEOTIDE SEQUENCE [LARGE SCALE GENOMIC DNA]</scope>
</reference>
<reference key="4">
    <citation type="journal article" date="2004" name="Genome Res.">
        <title>The status, quality, and expansion of the NIH full-length cDNA project: the Mammalian Gene Collection (MGC).</title>
        <authorList>
            <consortium name="The MGC Project Team"/>
        </authorList>
    </citation>
    <scope>NUCLEOTIDE SEQUENCE [LARGE SCALE MRNA]</scope>
</reference>
<reference key="5">
    <citation type="journal article" date="2009" name="Nucleic Acids Res.">
        <title>SMYD1, the myogenic activator, is a direct target of serum response factor and myogenin.</title>
        <authorList>
            <person name="Li D."/>
            <person name="Niu Z."/>
            <person name="Yu W."/>
            <person name="Qian Y."/>
            <person name="Wang Q."/>
            <person name="Li Q."/>
            <person name="Yi Z."/>
            <person name="Luo J."/>
            <person name="Wu X."/>
            <person name="Wang Y."/>
            <person name="Schwartz R.J."/>
            <person name="Liu M."/>
        </authorList>
    </citation>
    <scope>TISSUE SPECIFICITY</scope>
    <scope>INDUCTION BY SRF</scope>
</reference>
<organism evidence="6">
    <name type="scientific">Homo sapiens</name>
    <name type="common">Human</name>
    <dbReference type="NCBI Taxonomy" id="9606"/>
    <lineage>
        <taxon>Eukaryota</taxon>
        <taxon>Metazoa</taxon>
        <taxon>Chordata</taxon>
        <taxon>Craniata</taxon>
        <taxon>Vertebrata</taxon>
        <taxon>Euteleostomi</taxon>
        <taxon>Mammalia</taxon>
        <taxon>Eutheria</taxon>
        <taxon>Euarchontoglires</taxon>
        <taxon>Primates</taxon>
        <taxon>Haplorrhini</taxon>
        <taxon>Catarrhini</taxon>
        <taxon>Hominidae</taxon>
        <taxon>Homo</taxon>
    </lineage>
</organism>
<feature type="chain" id="PRO_0000218307" description="Histone-lysine N-methyltransferase SMYD1">
    <location>
        <begin position="1"/>
        <end position="490"/>
    </location>
</feature>
<feature type="domain" description="SET" evidence="4">
    <location>
        <begin position="7"/>
        <end position="253"/>
    </location>
</feature>
<feature type="zinc finger region" description="MYND-type" evidence="3">
    <location>
        <begin position="52"/>
        <end position="90"/>
    </location>
</feature>
<feature type="binding site" evidence="1">
    <location>
        <begin position="17"/>
        <end position="19"/>
    </location>
    <ligand>
        <name>S-adenosyl-L-methionine</name>
        <dbReference type="ChEBI" id="CHEBI:59789"/>
    </ligand>
</feature>
<feature type="binding site" evidence="3">
    <location>
        <position position="52"/>
    </location>
    <ligand>
        <name>Zn(2+)</name>
        <dbReference type="ChEBI" id="CHEBI:29105"/>
        <label>1</label>
    </ligand>
</feature>
<feature type="binding site" evidence="3">
    <location>
        <position position="55"/>
    </location>
    <ligand>
        <name>Zn(2+)</name>
        <dbReference type="ChEBI" id="CHEBI:29105"/>
        <label>1</label>
    </ligand>
</feature>
<feature type="binding site" evidence="3">
    <location>
        <position position="65"/>
    </location>
    <ligand>
        <name>Zn(2+)</name>
        <dbReference type="ChEBI" id="CHEBI:29105"/>
        <label>2</label>
    </ligand>
</feature>
<feature type="binding site" evidence="3">
    <location>
        <position position="68"/>
    </location>
    <ligand>
        <name>Zn(2+)</name>
        <dbReference type="ChEBI" id="CHEBI:29105"/>
        <label>2</label>
    </ligand>
</feature>
<feature type="binding site" evidence="3">
    <location>
        <position position="74"/>
    </location>
    <ligand>
        <name>Zn(2+)</name>
        <dbReference type="ChEBI" id="CHEBI:29105"/>
        <label>1</label>
    </ligand>
</feature>
<feature type="binding site" evidence="3">
    <location>
        <position position="78"/>
    </location>
    <ligand>
        <name>Zn(2+)</name>
        <dbReference type="ChEBI" id="CHEBI:29105"/>
        <label>1</label>
    </ligand>
</feature>
<feature type="binding site" evidence="3">
    <location>
        <position position="86"/>
    </location>
    <ligand>
        <name>Zn(2+)</name>
        <dbReference type="ChEBI" id="CHEBI:29105"/>
        <label>2</label>
    </ligand>
</feature>
<feature type="binding site" evidence="3">
    <location>
        <position position="90"/>
    </location>
    <ligand>
        <name>Zn(2+)</name>
        <dbReference type="ChEBI" id="CHEBI:29105"/>
        <label>2</label>
    </ligand>
</feature>
<feature type="binding site" evidence="4">
    <location>
        <position position="135"/>
    </location>
    <ligand>
        <name>S-adenosyl-L-methionine</name>
        <dbReference type="ChEBI" id="CHEBI:59789"/>
    </ligand>
</feature>
<feature type="binding site" evidence="1">
    <location>
        <begin position="205"/>
        <end position="206"/>
    </location>
    <ligand>
        <name>S-adenosyl-L-methionine</name>
        <dbReference type="ChEBI" id="CHEBI:59789"/>
    </ligand>
</feature>
<feature type="binding site" evidence="4">
    <location>
        <position position="208"/>
    </location>
    <ligand>
        <name>Zn(2+)</name>
        <dbReference type="ChEBI" id="CHEBI:29105"/>
    </ligand>
</feature>
<feature type="binding site" evidence="1">
    <location>
        <begin position="270"/>
        <end position="272"/>
    </location>
    <ligand>
        <name>S-adenosyl-L-methionine</name>
        <dbReference type="ChEBI" id="CHEBI:59789"/>
    </ligand>
</feature>
<feature type="binding site" evidence="4">
    <location>
        <position position="274"/>
    </location>
    <ligand>
        <name>Zn(2+)</name>
        <dbReference type="ChEBI" id="CHEBI:29105"/>
    </ligand>
</feature>
<feature type="binding site" evidence="4">
    <location>
        <position position="276"/>
    </location>
    <ligand>
        <name>Zn(2+)</name>
        <dbReference type="ChEBI" id="CHEBI:29105"/>
    </ligand>
</feature>
<feature type="binding site" evidence="4">
    <location>
        <position position="279"/>
    </location>
    <ligand>
        <name>Zn(2+)</name>
        <dbReference type="ChEBI" id="CHEBI:29105"/>
    </ligand>
</feature>
<feature type="sequence variant" id="VAR_052990" description="In dbSNP:rs1542087.">
    <original>Q</original>
    <variation>P</variation>
    <location>
        <position position="164"/>
    </location>
</feature>
<keyword id="KW-0963">Cytoplasm</keyword>
<keyword id="KW-0238">DNA-binding</keyword>
<keyword id="KW-0479">Metal-binding</keyword>
<keyword id="KW-0489">Methyltransferase</keyword>
<keyword id="KW-0539">Nucleus</keyword>
<keyword id="KW-1267">Proteomics identification</keyword>
<keyword id="KW-1185">Reference proteome</keyword>
<keyword id="KW-0678">Repressor</keyword>
<keyword id="KW-0949">S-adenosyl-L-methionine</keyword>
<keyword id="KW-0804">Transcription</keyword>
<keyword id="KW-0805">Transcription regulation</keyword>
<keyword id="KW-0808">Transferase</keyword>
<keyword id="KW-0862">Zinc</keyword>
<keyword id="KW-0863">Zinc-finger</keyword>
<evidence type="ECO:0000250" key="1"/>
<evidence type="ECO:0000250" key="2">
    <source>
        <dbReference type="UniProtKB" id="P97443"/>
    </source>
</evidence>
<evidence type="ECO:0000255" key="3">
    <source>
        <dbReference type="PROSITE-ProRule" id="PRU00134"/>
    </source>
</evidence>
<evidence type="ECO:0000255" key="4">
    <source>
        <dbReference type="PROSITE-ProRule" id="PRU00190"/>
    </source>
</evidence>
<evidence type="ECO:0000269" key="5">
    <source>
    </source>
</evidence>
<evidence type="ECO:0000312" key="6">
    <source>
        <dbReference type="EMBL" id="BAC03732.1"/>
    </source>
</evidence>
<dbReference type="EC" id="2.1.1.354" evidence="2"/>
<dbReference type="EMBL" id="AK091724">
    <property type="protein sequence ID" value="BAC03732.1"/>
    <property type="molecule type" value="mRNA"/>
</dbReference>
<dbReference type="EMBL" id="AL832035">
    <property type="protein sequence ID" value="CAI46139.1"/>
    <property type="molecule type" value="mRNA"/>
</dbReference>
<dbReference type="EMBL" id="AC092836">
    <property type="status" value="NOT_ANNOTATED_CDS"/>
    <property type="molecule type" value="Genomic_DNA"/>
</dbReference>
<dbReference type="EMBL" id="BC126191">
    <property type="protein sequence ID" value="AAI26192.1"/>
    <property type="molecule type" value="mRNA"/>
</dbReference>
<dbReference type="CCDS" id="CCDS33240.1"/>
<dbReference type="RefSeq" id="NP_938015.1">
    <property type="nucleotide sequence ID" value="NM_198274.4"/>
</dbReference>
<dbReference type="SMR" id="Q8NB12"/>
<dbReference type="BioGRID" id="127308">
    <property type="interactions" value="60"/>
</dbReference>
<dbReference type="FunCoup" id="Q8NB12">
    <property type="interactions" value="152"/>
</dbReference>
<dbReference type="IntAct" id="Q8NB12">
    <property type="interactions" value="51"/>
</dbReference>
<dbReference type="MINT" id="Q8NB12"/>
<dbReference type="STRING" id="9606.ENSP00000393453"/>
<dbReference type="ChEMBL" id="CHEMBL5465333"/>
<dbReference type="GlyGen" id="Q8NB12">
    <property type="glycosylation" value="1 site, 1 O-linked glycan (1 site)"/>
</dbReference>
<dbReference type="iPTMnet" id="Q8NB12"/>
<dbReference type="PhosphoSitePlus" id="Q8NB12"/>
<dbReference type="SwissPalm" id="Q8NB12"/>
<dbReference type="BioMuta" id="SMYD1"/>
<dbReference type="DMDM" id="34925329"/>
<dbReference type="jPOST" id="Q8NB12"/>
<dbReference type="MassIVE" id="Q8NB12"/>
<dbReference type="PaxDb" id="9606-ENSP00000393453"/>
<dbReference type="PeptideAtlas" id="Q8NB12"/>
<dbReference type="ProteomicsDB" id="72714"/>
<dbReference type="Antibodypedia" id="47498">
    <property type="antibodies" value="224 antibodies from 27 providers"/>
</dbReference>
<dbReference type="DNASU" id="150572"/>
<dbReference type="Ensembl" id="ENST00000419482.7">
    <property type="protein sequence ID" value="ENSP00000393453.2"/>
    <property type="gene ID" value="ENSG00000115593.15"/>
</dbReference>
<dbReference type="GeneID" id="150572"/>
<dbReference type="KEGG" id="hsa:150572"/>
<dbReference type="MANE-Select" id="ENST00000419482.7">
    <property type="protein sequence ID" value="ENSP00000393453.2"/>
    <property type="RefSeq nucleotide sequence ID" value="NM_198274.4"/>
    <property type="RefSeq protein sequence ID" value="NP_938015.1"/>
</dbReference>
<dbReference type="UCSC" id="uc002ssr.4">
    <property type="organism name" value="human"/>
</dbReference>
<dbReference type="AGR" id="HGNC:20986"/>
<dbReference type="CTD" id="150572"/>
<dbReference type="DisGeNET" id="150572"/>
<dbReference type="GeneCards" id="SMYD1"/>
<dbReference type="HGNC" id="HGNC:20986">
    <property type="gene designation" value="SMYD1"/>
</dbReference>
<dbReference type="HPA" id="ENSG00000115593">
    <property type="expression patterns" value="Group enriched (heart muscle, skeletal muscle, tongue)"/>
</dbReference>
<dbReference type="MIM" id="606846">
    <property type="type" value="gene"/>
</dbReference>
<dbReference type="neXtProt" id="NX_Q8NB12"/>
<dbReference type="OpenTargets" id="ENSG00000115593"/>
<dbReference type="PharmGKB" id="PA134862943"/>
<dbReference type="VEuPathDB" id="HostDB:ENSG00000115593"/>
<dbReference type="eggNOG" id="KOG2084">
    <property type="taxonomic scope" value="Eukaryota"/>
</dbReference>
<dbReference type="GeneTree" id="ENSGT00940000156114"/>
<dbReference type="HOGENOM" id="CLU_018406_1_1_1"/>
<dbReference type="InParanoid" id="Q8NB12"/>
<dbReference type="OMA" id="KWYFDCQ"/>
<dbReference type="OrthoDB" id="1028014at2759"/>
<dbReference type="PAN-GO" id="Q8NB12">
    <property type="GO annotations" value="3 GO annotations based on evolutionary models"/>
</dbReference>
<dbReference type="PhylomeDB" id="Q8NB12"/>
<dbReference type="TreeFam" id="TF106487"/>
<dbReference type="BioCyc" id="MetaCyc:ENSG00000115593-MONOMER"/>
<dbReference type="PathwayCommons" id="Q8NB12"/>
<dbReference type="Reactome" id="R-HSA-9733709">
    <property type="pathway name" value="Cardiogenesis"/>
</dbReference>
<dbReference type="SignaLink" id="Q8NB12"/>
<dbReference type="BioGRID-ORCS" id="150572">
    <property type="hits" value="8 hits in 1162 CRISPR screens"/>
</dbReference>
<dbReference type="GenomeRNAi" id="150572"/>
<dbReference type="Pharos" id="Q8NB12">
    <property type="development level" value="Tbio"/>
</dbReference>
<dbReference type="PRO" id="PR:Q8NB12"/>
<dbReference type="Proteomes" id="UP000005640">
    <property type="component" value="Chromosome 2"/>
</dbReference>
<dbReference type="RNAct" id="Q8NB12">
    <property type="molecule type" value="protein"/>
</dbReference>
<dbReference type="Bgee" id="ENSG00000115593">
    <property type="expression patterns" value="Expressed in left ventricle myocardium and 114 other cell types or tissues"/>
</dbReference>
<dbReference type="ExpressionAtlas" id="Q8NB12">
    <property type="expression patterns" value="baseline and differential"/>
</dbReference>
<dbReference type="GO" id="GO:0005737">
    <property type="term" value="C:cytoplasm"/>
    <property type="evidence" value="ECO:0007669"/>
    <property type="project" value="UniProtKB-SubCell"/>
</dbReference>
<dbReference type="GO" id="GO:0005634">
    <property type="term" value="C:nucleus"/>
    <property type="evidence" value="ECO:0000318"/>
    <property type="project" value="GO_Central"/>
</dbReference>
<dbReference type="GO" id="GO:0003677">
    <property type="term" value="F:DNA binding"/>
    <property type="evidence" value="ECO:0007669"/>
    <property type="project" value="UniProtKB-KW"/>
</dbReference>
<dbReference type="GO" id="GO:0140999">
    <property type="term" value="F:histone H3K4 trimethyltransferase activity"/>
    <property type="evidence" value="ECO:0007669"/>
    <property type="project" value="UniProtKB-EC"/>
</dbReference>
<dbReference type="GO" id="GO:0003714">
    <property type="term" value="F:transcription corepressor activity"/>
    <property type="evidence" value="ECO:0007669"/>
    <property type="project" value="Ensembl"/>
</dbReference>
<dbReference type="GO" id="GO:0008270">
    <property type="term" value="F:zinc ion binding"/>
    <property type="evidence" value="ECO:0007669"/>
    <property type="project" value="UniProtKB-KW"/>
</dbReference>
<dbReference type="GO" id="GO:0007507">
    <property type="term" value="P:heart development"/>
    <property type="evidence" value="ECO:0007669"/>
    <property type="project" value="Ensembl"/>
</dbReference>
<dbReference type="GO" id="GO:0032259">
    <property type="term" value="P:methylation"/>
    <property type="evidence" value="ECO:0007669"/>
    <property type="project" value="UniProtKB-KW"/>
</dbReference>
<dbReference type="GO" id="GO:0045663">
    <property type="term" value="P:positive regulation of myoblast differentiation"/>
    <property type="evidence" value="ECO:0000314"/>
    <property type="project" value="BHF-UCL"/>
</dbReference>
<dbReference type="GO" id="GO:0010831">
    <property type="term" value="P:positive regulation of myotube differentiation"/>
    <property type="evidence" value="ECO:0000314"/>
    <property type="project" value="BHF-UCL"/>
</dbReference>
<dbReference type="GO" id="GO:0035914">
    <property type="term" value="P:skeletal muscle cell differentiation"/>
    <property type="evidence" value="ECO:0007669"/>
    <property type="project" value="Ensembl"/>
</dbReference>
<dbReference type="CDD" id="cd10526">
    <property type="entry name" value="SET_SMYD1"/>
    <property type="match status" value="1"/>
</dbReference>
<dbReference type="FunFam" id="1.25.40.10:FF:000132">
    <property type="entry name" value="Histone-lysine N-methyltransferase SMYD1 isoform 1"/>
    <property type="match status" value="1"/>
</dbReference>
<dbReference type="FunFam" id="1.25.40.970:FF:000001">
    <property type="entry name" value="Histone-lysine N-methyltransferase SMYD1 isoform 1"/>
    <property type="match status" value="1"/>
</dbReference>
<dbReference type="FunFam" id="2.170.270.10:FF:000013">
    <property type="entry name" value="Histone-lysine N-methyltransferase SMYD1 isoform 1"/>
    <property type="match status" value="1"/>
</dbReference>
<dbReference type="FunFam" id="6.10.140.2220:FF:000005">
    <property type="entry name" value="Histone-lysine N-methyltransferase SMYD1 isoform 1"/>
    <property type="match status" value="1"/>
</dbReference>
<dbReference type="FunFam" id="1.10.220.160:FF:000002">
    <property type="entry name" value="SET and MYND domain containing 1"/>
    <property type="match status" value="1"/>
</dbReference>
<dbReference type="Gene3D" id="1.10.220.160">
    <property type="match status" value="1"/>
</dbReference>
<dbReference type="Gene3D" id="1.25.40.970">
    <property type="match status" value="1"/>
</dbReference>
<dbReference type="Gene3D" id="6.10.140.2220">
    <property type="match status" value="1"/>
</dbReference>
<dbReference type="Gene3D" id="2.170.270.10">
    <property type="entry name" value="SET domain"/>
    <property type="match status" value="1"/>
</dbReference>
<dbReference type="Gene3D" id="1.25.40.10">
    <property type="entry name" value="Tetratricopeptide repeat domain"/>
    <property type="match status" value="1"/>
</dbReference>
<dbReference type="InterPro" id="IPR050869">
    <property type="entry name" value="H3K4_H4K5_MeTrfase"/>
</dbReference>
<dbReference type="InterPro" id="IPR001214">
    <property type="entry name" value="SET_dom"/>
</dbReference>
<dbReference type="InterPro" id="IPR046341">
    <property type="entry name" value="SET_dom_sf"/>
</dbReference>
<dbReference type="InterPro" id="IPR044418">
    <property type="entry name" value="SMYD1_SET"/>
</dbReference>
<dbReference type="InterPro" id="IPR011990">
    <property type="entry name" value="TPR-like_helical_dom_sf"/>
</dbReference>
<dbReference type="InterPro" id="IPR002893">
    <property type="entry name" value="Znf_MYND"/>
</dbReference>
<dbReference type="PANTHER" id="PTHR12197">
    <property type="entry name" value="HISTONE-LYSINE N-METHYLTRANSFERASE SMYD"/>
    <property type="match status" value="1"/>
</dbReference>
<dbReference type="PANTHER" id="PTHR12197:SF184">
    <property type="entry name" value="HISTONE-LYSINE N-METHYLTRANSFERASE SMYD1"/>
    <property type="match status" value="1"/>
</dbReference>
<dbReference type="Pfam" id="PF00856">
    <property type="entry name" value="SET"/>
    <property type="match status" value="1"/>
</dbReference>
<dbReference type="Pfam" id="PF01753">
    <property type="entry name" value="zf-MYND"/>
    <property type="match status" value="1"/>
</dbReference>
<dbReference type="SMART" id="SM00317">
    <property type="entry name" value="SET"/>
    <property type="match status" value="1"/>
</dbReference>
<dbReference type="SUPFAM" id="SSF82199">
    <property type="entry name" value="SET domain"/>
    <property type="match status" value="1"/>
</dbReference>
<dbReference type="PROSITE" id="PS50280">
    <property type="entry name" value="SET"/>
    <property type="match status" value="1"/>
</dbReference>
<dbReference type="PROSITE" id="PS01360">
    <property type="entry name" value="ZF_MYND_1"/>
    <property type="match status" value="1"/>
</dbReference>
<dbReference type="PROSITE" id="PS50865">
    <property type="entry name" value="ZF_MYND_2"/>
    <property type="match status" value="1"/>
</dbReference>
<proteinExistence type="evidence at protein level"/>
<protein>
    <recommendedName>
        <fullName>Histone-lysine N-methyltransferase SMYD1</fullName>
        <ecNumber evidence="2">2.1.1.354</ecNumber>
    </recommendedName>
    <alternativeName>
        <fullName>SET and MYND domain-containing protein 1</fullName>
    </alternativeName>
</protein>
<comment type="function">
    <text evidence="2">Methylates histone H3 at 'Lys-4' (H3K4me), seems able to perform both mono-, di-, and trimethylation. Acts as a transcriptional repressor. Essential for cardiomyocyte differentiation and cardiac morphogenesis.</text>
</comment>
<comment type="catalytic activity">
    <reaction evidence="2">
        <text>L-lysyl(4)-[histone H3] + 3 S-adenosyl-L-methionine = N(6),N(6),N(6)-trimethyl-L-lysyl(4)-[histone H3] + 3 S-adenosyl-L-homocysteine + 3 H(+)</text>
        <dbReference type="Rhea" id="RHEA:60260"/>
        <dbReference type="Rhea" id="RHEA-COMP:15537"/>
        <dbReference type="Rhea" id="RHEA-COMP:15547"/>
        <dbReference type="ChEBI" id="CHEBI:15378"/>
        <dbReference type="ChEBI" id="CHEBI:29969"/>
        <dbReference type="ChEBI" id="CHEBI:57856"/>
        <dbReference type="ChEBI" id="CHEBI:59789"/>
        <dbReference type="ChEBI" id="CHEBI:61961"/>
        <dbReference type="EC" id="2.1.1.354"/>
    </reaction>
</comment>
<comment type="subunit">
    <text evidence="2">Interacts with HDAC1, HDAC2 and HDAC3. Interacts (via MYND-type zinc finger) with NACA isoform skNAC.</text>
</comment>
<comment type="interaction">
    <interactant intactId="EBI-8463848">
        <id>Q8NB12</id>
    </interactant>
    <interactant intactId="EBI-1042898">
        <id>P30520</id>
        <label>ADSS2</label>
    </interactant>
    <organismsDiffer>false</organismsDiffer>
    <experiments>5</experiments>
</comment>
<comment type="interaction">
    <interactant intactId="EBI-8463848">
        <id>Q8NB12</id>
    </interactant>
    <interactant intactId="EBI-948603">
        <id>Q03989</id>
        <label>ARID5A</label>
    </interactant>
    <organismsDiffer>false</organismsDiffer>
    <experiments>3</experiments>
</comment>
<comment type="interaction">
    <interactant intactId="EBI-8463848">
        <id>Q8NB12</id>
    </interactant>
    <interactant intactId="EBI-1642333">
        <id>Q9BYV9</id>
        <label>BACH2</label>
    </interactant>
    <organismsDiffer>false</organismsDiffer>
    <experiments>3</experiments>
</comment>
<comment type="interaction">
    <interactant intactId="EBI-8463848">
        <id>Q8NB12</id>
    </interactant>
    <interactant intactId="EBI-711810">
        <id>O14503</id>
        <label>BHLHE40</label>
    </interactant>
    <organismsDiffer>false</organismsDiffer>
    <experiments>8</experiments>
</comment>
<comment type="interaction">
    <interactant intactId="EBI-8463848">
        <id>Q8NB12</id>
    </interactant>
    <interactant intactId="EBI-718615">
        <id>Q9H5F2</id>
        <label>CFAP68</label>
    </interactant>
    <organismsDiffer>false</organismsDiffer>
    <experiments>3</experiments>
</comment>
<comment type="interaction">
    <interactant intactId="EBI-8463848">
        <id>Q8NB12</id>
    </interactant>
    <interactant intactId="EBI-12811067">
        <id>Q6J272</id>
        <label>CIMIP2A</label>
    </interactant>
    <organismsDiffer>false</organismsDiffer>
    <experiments>3</experiments>
</comment>
<comment type="interaction">
    <interactant intactId="EBI-8463848">
        <id>Q8NB12</id>
    </interactant>
    <interactant intactId="EBI-11988027">
        <id>Q9NRI5-2</id>
        <label>DISC1</label>
    </interactant>
    <organismsDiffer>false</organismsDiffer>
    <experiments>3</experiments>
</comment>
<comment type="interaction">
    <interactant intactId="EBI-8463848">
        <id>Q8NB12</id>
    </interactant>
    <interactant intactId="EBI-10185025">
        <id>Q86TH3</id>
        <label>DVL1</label>
    </interactant>
    <organismsDiffer>false</organismsDiffer>
    <experiments>3</experiments>
</comment>
<comment type="interaction">
    <interactant intactId="EBI-8463848">
        <id>Q8NB12</id>
    </interactant>
    <interactant intactId="EBI-8465160">
        <id>Q9H8W3</id>
        <label>FAM204A</label>
    </interactant>
    <organismsDiffer>false</organismsDiffer>
    <experiments>4</experiments>
</comment>
<comment type="interaction">
    <interactant intactId="EBI-8463848">
        <id>Q8NB12</id>
    </interactant>
    <interactant intactId="EBI-1384254">
        <id>Q86UY5</id>
        <label>FAM83A</label>
    </interactant>
    <organismsDiffer>false</organismsDiffer>
    <experiments>3</experiments>
</comment>
<comment type="interaction">
    <interactant intactId="EBI-8463848">
        <id>Q8NB12</id>
    </interactant>
    <interactant intactId="EBI-12845222">
        <id>Q9NVL1-2</id>
        <label>FAM86C1P</label>
    </interactant>
    <organismsDiffer>false</organismsDiffer>
    <experiments>3</experiments>
</comment>
<comment type="interaction">
    <interactant intactId="EBI-8463848">
        <id>Q8NB12</id>
    </interactant>
    <interactant intactId="EBI-745201">
        <id>Q9BSH5</id>
        <label>HDHD3</label>
    </interactant>
    <organismsDiffer>false</organismsDiffer>
    <experiments>3</experiments>
</comment>
<comment type="interaction">
    <interactant intactId="EBI-8463848">
        <id>Q8NB12</id>
    </interactant>
    <interactant intactId="EBI-740641">
        <id>Q9NP66</id>
        <label>HMG20A</label>
    </interactant>
    <organismsDiffer>false</organismsDiffer>
    <experiments>3</experiments>
</comment>
<comment type="interaction">
    <interactant intactId="EBI-8463848">
        <id>Q8NB12</id>
    </interactant>
    <interactant intactId="EBI-10172004">
        <id>Q8IX15-3</id>
        <label>HOMEZ</label>
    </interactant>
    <organismsDiffer>false</organismsDiffer>
    <experiments>3</experiments>
</comment>
<comment type="interaction">
    <interactant intactId="EBI-8463848">
        <id>Q8NB12</id>
    </interactant>
    <interactant intactId="EBI-10988217">
        <id>Q96L93-6</id>
        <label>KIF16B</label>
    </interactant>
    <organismsDiffer>false</organismsDiffer>
    <experiments>3</experiments>
</comment>
<comment type="interaction">
    <interactant intactId="EBI-8463848">
        <id>Q8NB12</id>
    </interactant>
    <interactant intactId="EBI-1058674">
        <id>Q92764</id>
        <label>KRT35</label>
    </interactant>
    <organismsDiffer>false</organismsDiffer>
    <experiments>3</experiments>
</comment>
<comment type="interaction">
    <interactant intactId="EBI-8463848">
        <id>Q8NB12</id>
    </interactant>
    <interactant intactId="EBI-724076">
        <id>Q99750</id>
        <label>MDFI</label>
    </interactant>
    <organismsDiffer>false</organismsDiffer>
    <experiments>3</experiments>
</comment>
<comment type="interaction">
    <interactant intactId="EBI-8463848">
        <id>Q8NB12</id>
    </interactant>
    <interactant intactId="EBI-16439278">
        <id>Q6FHY5</id>
        <label>MEOX2</label>
    </interactant>
    <organismsDiffer>false</organismsDiffer>
    <experiments>3</experiments>
</comment>
<comment type="interaction">
    <interactant intactId="EBI-8463848">
        <id>Q8NB12</id>
    </interactant>
    <interactant intactId="EBI-2880253">
        <id>A7E2Y1</id>
        <label>MYH7B</label>
    </interactant>
    <organismsDiffer>false</organismsDiffer>
    <experiments>2</experiments>
</comment>
<comment type="interaction">
    <interactant intactId="EBI-8463848">
        <id>Q8NB12</id>
    </interactant>
    <interactant intactId="EBI-12813813">
        <id>A7E2Y1-2</id>
        <label>MYH7B</label>
    </interactant>
    <organismsDiffer>false</organismsDiffer>
    <experiments>3</experiments>
</comment>
<comment type="interaction">
    <interactant intactId="EBI-8463848">
        <id>Q8NB12</id>
    </interactant>
    <interactant intactId="EBI-475646">
        <id>P07196</id>
        <label>NEFL</label>
    </interactant>
    <organismsDiffer>false</organismsDiffer>
    <experiments>3</experiments>
</comment>
<comment type="interaction">
    <interactant intactId="EBI-8463848">
        <id>Q8NB12</id>
    </interactant>
    <interactant intactId="EBI-11022007">
        <id>Q9HBE1-4</id>
        <label>PATZ1</label>
    </interactant>
    <organismsDiffer>false</organismsDiffer>
    <experiments>3</experiments>
</comment>
<comment type="interaction">
    <interactant intactId="EBI-8463848">
        <id>Q8NB12</id>
    </interactant>
    <interactant intactId="EBI-12029004">
        <id>P78424</id>
        <label>POU6F2</label>
    </interactant>
    <organismsDiffer>false</organismsDiffer>
    <experiments>3</experiments>
</comment>
<comment type="interaction">
    <interactant intactId="EBI-8463848">
        <id>Q8NB12</id>
    </interactant>
    <interactant intactId="EBI-715531">
        <id>Q9BQ04</id>
        <label>RBM4B</label>
    </interactant>
    <organismsDiffer>false</organismsDiffer>
    <experiments>2</experiments>
</comment>
<comment type="interaction">
    <interactant intactId="EBI-8463848">
        <id>Q8NB12</id>
    </interactant>
    <interactant intactId="EBI-12169267">
        <id>Q9H0K4</id>
        <label>RSPH6A</label>
    </interactant>
    <organismsDiffer>false</organismsDiffer>
    <experiments>3</experiments>
</comment>
<comment type="interaction">
    <interactant intactId="EBI-8463848">
        <id>Q8NB12</id>
    </interactant>
    <interactant intactId="EBI-6257312">
        <id>Q9BVN2</id>
        <label>RUSC1</label>
    </interactant>
    <organismsDiffer>false</organismsDiffer>
    <experiments>3</experiments>
</comment>
<comment type="interaction">
    <interactant intactId="EBI-8463848">
        <id>Q8NB12</id>
    </interactant>
    <interactant intactId="EBI-10329449">
        <id>Q9Y5W9</id>
        <label>SNX11</label>
    </interactant>
    <organismsDiffer>false</organismsDiffer>
    <experiments>3</experiments>
</comment>
<comment type="interaction">
    <interactant intactId="EBI-8463848">
        <id>Q8NB12</id>
    </interactant>
    <interactant intactId="EBI-11959123">
        <id>Q99932-2</id>
        <label>SPAG8</label>
    </interactant>
    <organismsDiffer>false</organismsDiffer>
    <experiments>3</experiments>
</comment>
<comment type="interaction">
    <interactant intactId="EBI-8463848">
        <id>Q8NB12</id>
    </interactant>
    <interactant intactId="EBI-2800552">
        <id>Q3YBR2</id>
        <label>TBRG1</label>
    </interactant>
    <organismsDiffer>false</organismsDiffer>
    <experiments>3</experiments>
</comment>
<comment type="interaction">
    <interactant intactId="EBI-8463848">
        <id>Q8NB12</id>
    </interactant>
    <interactant intactId="EBI-11975223">
        <id>Q70EL1-9</id>
        <label>USP54</label>
    </interactant>
    <organismsDiffer>false</organismsDiffer>
    <experiments>3</experiments>
</comment>
<comment type="interaction">
    <interactant intactId="EBI-8463848">
        <id>Q8NB12</id>
    </interactant>
    <interactant intactId="EBI-473284">
        <id>Q9BVJ6</id>
        <label>UTP14A</label>
    </interactant>
    <organismsDiffer>false</organismsDiffer>
    <experiments>4</experiments>
</comment>
<comment type="interaction">
    <interactant intactId="EBI-8463848">
        <id>Q8NB12</id>
    </interactant>
    <interactant intactId="EBI-7229473">
        <id>Q9H5J0</id>
        <label>ZBTB3</label>
    </interactant>
    <organismsDiffer>false</organismsDiffer>
    <experiments>3</experiments>
</comment>
<comment type="interaction">
    <interactant intactId="EBI-8463848">
        <id>Q8NB12</id>
    </interactant>
    <interactant intactId="EBI-5658292">
        <id>Q8NCP5</id>
        <label>ZBTB44</label>
    </interactant>
    <organismsDiffer>false</organismsDiffer>
    <experiments>5</experiments>
</comment>
<comment type="subcellular location">
    <subcellularLocation>
        <location evidence="1">Cytoplasm</location>
    </subcellularLocation>
    <subcellularLocation>
        <location evidence="1">Nucleus</location>
    </subcellularLocation>
</comment>
<comment type="tissue specificity">
    <text evidence="5">Expression seems mostly restricted to heart and skeletal muscle.</text>
</comment>
<comment type="induction">
    <text evidence="5">By serum response factor SRF and myogenin. SRF binds to the CArG site and MYOG binds to the E-box element on SMYD1 promoter.</text>
</comment>
<comment type="domain">
    <text evidence="1">The SET domain is split between the S-sequence (residues 1-49) and the core SET domain (residues 181-258), however the two segments still come together to form a conserved SET domain fold.</text>
</comment>
<comment type="similarity">
    <text evidence="4">Belongs to the class V-like SAM-binding methyltransferase superfamily.</text>
</comment>
<gene>
    <name type="primary">SMYD1</name>
</gene>
<name>SMYD1_HUMAN</name>